<reference key="1">
    <citation type="journal article" date="1997" name="Nature">
        <title>The nucleotide sequence of Saccharomyces cerevisiae chromosome XIII.</title>
        <authorList>
            <person name="Bowman S."/>
            <person name="Churcher C.M."/>
            <person name="Badcock K."/>
            <person name="Brown D."/>
            <person name="Chillingworth T."/>
            <person name="Connor R."/>
            <person name="Dedman K."/>
            <person name="Devlin K."/>
            <person name="Gentles S."/>
            <person name="Hamlin N."/>
            <person name="Hunt S."/>
            <person name="Jagels K."/>
            <person name="Lye G."/>
            <person name="Moule S."/>
            <person name="Odell C."/>
            <person name="Pearson D."/>
            <person name="Rajandream M.A."/>
            <person name="Rice P."/>
            <person name="Skelton J."/>
            <person name="Walsh S.V."/>
            <person name="Whitehead S."/>
            <person name="Barrell B.G."/>
        </authorList>
    </citation>
    <scope>NUCLEOTIDE SEQUENCE [LARGE SCALE GENOMIC DNA]</scope>
    <source>
        <strain>ATCC 204508 / S288c</strain>
    </source>
</reference>
<reference key="2">
    <citation type="journal article" date="2014" name="G3 (Bethesda)">
        <title>The reference genome sequence of Saccharomyces cerevisiae: Then and now.</title>
        <authorList>
            <person name="Engel S.R."/>
            <person name="Dietrich F.S."/>
            <person name="Fisk D.G."/>
            <person name="Binkley G."/>
            <person name="Balakrishnan R."/>
            <person name="Costanzo M.C."/>
            <person name="Dwight S.S."/>
            <person name="Hitz B.C."/>
            <person name="Karra K."/>
            <person name="Nash R.S."/>
            <person name="Weng S."/>
            <person name="Wong E.D."/>
            <person name="Lloyd P."/>
            <person name="Skrzypek M.S."/>
            <person name="Miyasato S.R."/>
            <person name="Simison M."/>
            <person name="Cherry J.M."/>
        </authorList>
    </citation>
    <scope>GENOME REANNOTATION</scope>
    <source>
        <strain>ATCC 204508 / S288c</strain>
    </source>
</reference>
<reference key="3">
    <citation type="journal article" date="2003" name="Genome Res.">
        <title>Systematic discovery of new genes in the Saccharomyces cerevisiae genome.</title>
        <authorList>
            <person name="Kessler M.M."/>
            <person name="Zeng Q."/>
            <person name="Hogan S."/>
            <person name="Cook R."/>
            <person name="Morales A.J."/>
            <person name="Cottarel G."/>
        </authorList>
    </citation>
    <scope>GENOME REANNOTATION</scope>
</reference>
<name>YM054_YEAST</name>
<protein>
    <recommendedName>
        <fullName>Uncharacterized protein YML054C-A</fullName>
    </recommendedName>
</protein>
<sequence>MIPFPAQHEIFHAYIGRITPHSSRCIANMWHSAHFFHENSLSIMKTLVPWTL</sequence>
<gene>
    <name type="ordered locus">YML054C-A</name>
</gene>
<proteinExistence type="predicted"/>
<accession>Q3E809</accession>
<accession>D6VZC1</accession>
<dbReference type="EMBL" id="Z46729">
    <property type="status" value="NOT_ANNOTATED_CDS"/>
    <property type="molecule type" value="Genomic_DNA"/>
</dbReference>
<dbReference type="EMBL" id="BK006946">
    <property type="protein sequence ID" value="DAA09845.1"/>
    <property type="molecule type" value="Genomic_DNA"/>
</dbReference>
<dbReference type="RefSeq" id="NP_878139.1">
    <property type="nucleotide sequence ID" value="NM_001184571.1"/>
</dbReference>
<dbReference type="BioGRID" id="37039">
    <property type="interactions" value="59"/>
</dbReference>
<dbReference type="FunCoup" id="Q3E809">
    <property type="interactions" value="8"/>
</dbReference>
<dbReference type="STRING" id="4932.YML054C-A"/>
<dbReference type="PaxDb" id="4932-YML054C-A"/>
<dbReference type="EnsemblFungi" id="YML054C-A_mRNA">
    <property type="protein sequence ID" value="YML054C-A"/>
    <property type="gene ID" value="YML054C-A"/>
</dbReference>
<dbReference type="GeneID" id="1466497"/>
<dbReference type="KEGG" id="sce:YML054C-A"/>
<dbReference type="AGR" id="SGD:S000028573"/>
<dbReference type="SGD" id="S000028573">
    <property type="gene designation" value="YML054C-A"/>
</dbReference>
<dbReference type="VEuPathDB" id="FungiDB:YML054C-A"/>
<dbReference type="HOGENOM" id="CLU_3089070_0_0_1"/>
<dbReference type="InParanoid" id="Q3E809"/>
<dbReference type="OrthoDB" id="10268201at2759"/>
<dbReference type="BioCyc" id="YEAST:G3O-33026-MONOMER"/>
<dbReference type="BioGRID-ORCS" id="1466497">
    <property type="hits" value="4 hits in 10 CRISPR screens"/>
</dbReference>
<dbReference type="PRO" id="PR:Q3E809"/>
<dbReference type="Proteomes" id="UP000002311">
    <property type="component" value="Chromosome XIII"/>
</dbReference>
<dbReference type="RNAct" id="Q3E809">
    <property type="molecule type" value="protein"/>
</dbReference>
<organism>
    <name type="scientific">Saccharomyces cerevisiae (strain ATCC 204508 / S288c)</name>
    <name type="common">Baker's yeast</name>
    <dbReference type="NCBI Taxonomy" id="559292"/>
    <lineage>
        <taxon>Eukaryota</taxon>
        <taxon>Fungi</taxon>
        <taxon>Dikarya</taxon>
        <taxon>Ascomycota</taxon>
        <taxon>Saccharomycotina</taxon>
        <taxon>Saccharomycetes</taxon>
        <taxon>Saccharomycetales</taxon>
        <taxon>Saccharomycetaceae</taxon>
        <taxon>Saccharomyces</taxon>
    </lineage>
</organism>
<keyword id="KW-1185">Reference proteome</keyword>
<feature type="chain" id="PRO_0000247782" description="Uncharacterized protein YML054C-A">
    <location>
        <begin position="1"/>
        <end position="52"/>
    </location>
</feature>